<protein>
    <recommendedName>
        <fullName>FAD assembly factor SdhE</fullName>
    </recommendedName>
</protein>
<evidence type="ECO:0000250" key="1">
    <source>
        <dbReference type="UniProtKB" id="G4V4G2"/>
    </source>
</evidence>
<evidence type="ECO:0000250" key="2">
    <source>
        <dbReference type="UniProtKB" id="P64559"/>
    </source>
</evidence>
<evidence type="ECO:0000305" key="3"/>
<dbReference type="EMBL" id="CP000026">
    <property type="protein sequence ID" value="AAV78756.1"/>
    <property type="molecule type" value="Genomic_DNA"/>
</dbReference>
<dbReference type="RefSeq" id="WP_000351186.1">
    <property type="nucleotide sequence ID" value="NC_006511.1"/>
</dbReference>
<dbReference type="SMR" id="Q5PJF5"/>
<dbReference type="GeneID" id="66757346"/>
<dbReference type="KEGG" id="spt:SPA2915"/>
<dbReference type="HOGENOM" id="CLU_103054_2_2_6"/>
<dbReference type="Proteomes" id="UP000008185">
    <property type="component" value="Chromosome"/>
</dbReference>
<dbReference type="GO" id="GO:0005737">
    <property type="term" value="C:cytoplasm"/>
    <property type="evidence" value="ECO:0007669"/>
    <property type="project" value="UniProtKB-SubCell"/>
</dbReference>
<dbReference type="GO" id="GO:0006105">
    <property type="term" value="P:succinate metabolic process"/>
    <property type="evidence" value="ECO:0007669"/>
    <property type="project" value="TreeGrafter"/>
</dbReference>
<dbReference type="FunFam" id="1.10.150.250:FF:000001">
    <property type="entry name" value="FAD assembly factor SdhE"/>
    <property type="match status" value="1"/>
</dbReference>
<dbReference type="Gene3D" id="1.10.150.250">
    <property type="entry name" value="Flavinator of succinate dehydrogenase"/>
    <property type="match status" value="1"/>
</dbReference>
<dbReference type="InterPro" id="IPR005631">
    <property type="entry name" value="SDH"/>
</dbReference>
<dbReference type="InterPro" id="IPR036714">
    <property type="entry name" value="SDH_sf"/>
</dbReference>
<dbReference type="InterPro" id="IPR050531">
    <property type="entry name" value="SdhE_FAD_assembly_factor"/>
</dbReference>
<dbReference type="NCBIfam" id="NF008130">
    <property type="entry name" value="PRK10878.1"/>
    <property type="match status" value="1"/>
</dbReference>
<dbReference type="PANTHER" id="PTHR39585">
    <property type="entry name" value="FAD ASSEMBLY FACTOR SDHE"/>
    <property type="match status" value="1"/>
</dbReference>
<dbReference type="PANTHER" id="PTHR39585:SF1">
    <property type="entry name" value="FAD ASSEMBLY FACTOR SDHE"/>
    <property type="match status" value="1"/>
</dbReference>
<dbReference type="Pfam" id="PF03937">
    <property type="entry name" value="Sdh5"/>
    <property type="match status" value="1"/>
</dbReference>
<dbReference type="SUPFAM" id="SSF109910">
    <property type="entry name" value="YgfY-like"/>
    <property type="match status" value="1"/>
</dbReference>
<gene>
    <name type="primary">sdhE</name>
    <name type="synonym">ygfY</name>
    <name type="ordered locus">SPA2915</name>
</gene>
<name>SDHE_SALPA</name>
<organism>
    <name type="scientific">Salmonella paratyphi A (strain ATCC 9150 / SARB42)</name>
    <dbReference type="NCBI Taxonomy" id="295319"/>
    <lineage>
        <taxon>Bacteria</taxon>
        <taxon>Pseudomonadati</taxon>
        <taxon>Pseudomonadota</taxon>
        <taxon>Gammaproteobacteria</taxon>
        <taxon>Enterobacterales</taxon>
        <taxon>Enterobacteriaceae</taxon>
        <taxon>Salmonella</taxon>
    </lineage>
</organism>
<accession>Q5PJF5</accession>
<sequence>MDIHNKARIHWACRRGMRELDISIMPFFEHEYDSLSDEEKRIFVRLLQSDDPDLFNWLMNHGKPADAELEQMVRLIQTRNRERGPVAI</sequence>
<keyword id="KW-0143">Chaperone</keyword>
<keyword id="KW-0963">Cytoplasm</keyword>
<comment type="function">
    <text evidence="1">An FAD assembly protein, which accelerates covalent attachment of the cofactor into other proteins. Plays an essential role in the assembly of succinate dehydrogenase (SDH, respiratory complex II), an enzyme complex that is a component of both the tricarboxylic acid cycle and the electron transport chain, and which couples the oxidation of succinate to fumarate with the reduction of ubiquinone (coenzyme Q) to ubiquinol. Required for flavinylation (covalent attachment of FAD) of the flavoprotein subunit SdhA of SDH and other flavinylated proteins as well.</text>
</comment>
<comment type="subunit">
    <text evidence="2">Monomer.</text>
</comment>
<comment type="subcellular location">
    <subcellularLocation>
        <location evidence="1">Cytoplasm</location>
    </subcellularLocation>
</comment>
<comment type="similarity">
    <text evidence="3">Belongs to the SdhE FAD assembly factor family.</text>
</comment>
<reference key="1">
    <citation type="journal article" date="2004" name="Nat. Genet.">
        <title>Comparison of genome degradation in Paratyphi A and Typhi, human-restricted serovars of Salmonella enterica that cause typhoid.</title>
        <authorList>
            <person name="McClelland M."/>
            <person name="Sanderson K.E."/>
            <person name="Clifton S.W."/>
            <person name="Latreille P."/>
            <person name="Porwollik S."/>
            <person name="Sabo A."/>
            <person name="Meyer R."/>
            <person name="Bieri T."/>
            <person name="Ozersky P."/>
            <person name="McLellan M."/>
            <person name="Harkins C.R."/>
            <person name="Wang C."/>
            <person name="Nguyen C."/>
            <person name="Berghoff A."/>
            <person name="Elliott G."/>
            <person name="Kohlberg S."/>
            <person name="Strong C."/>
            <person name="Du F."/>
            <person name="Carter J."/>
            <person name="Kremizki C."/>
            <person name="Layman D."/>
            <person name="Leonard S."/>
            <person name="Sun H."/>
            <person name="Fulton L."/>
            <person name="Nash W."/>
            <person name="Miner T."/>
            <person name="Minx P."/>
            <person name="Delehaunty K."/>
            <person name="Fronick C."/>
            <person name="Magrini V."/>
            <person name="Nhan M."/>
            <person name="Warren W."/>
            <person name="Florea L."/>
            <person name="Spieth J."/>
            <person name="Wilson R.K."/>
        </authorList>
    </citation>
    <scope>NUCLEOTIDE SEQUENCE [LARGE SCALE GENOMIC DNA]</scope>
    <source>
        <strain>ATCC 9150 / SARB42</strain>
    </source>
</reference>
<proteinExistence type="inferred from homology"/>
<feature type="chain" id="PRO_0000214420" description="FAD assembly factor SdhE">
    <location>
        <begin position="1"/>
        <end position="88"/>
    </location>
</feature>